<gene>
    <name evidence="1" type="primary">fabV</name>
    <name type="ordered locus">VFMJ11_0926</name>
</gene>
<name>FABV_ALIFM</name>
<accession>B5FCI7</accession>
<dbReference type="EC" id="1.3.1.9" evidence="1"/>
<dbReference type="EMBL" id="CP001139">
    <property type="protein sequence ID" value="ACH65614.1"/>
    <property type="molecule type" value="Genomic_DNA"/>
</dbReference>
<dbReference type="RefSeq" id="WP_012533173.1">
    <property type="nucleotide sequence ID" value="NC_011184.1"/>
</dbReference>
<dbReference type="SMR" id="B5FCI7"/>
<dbReference type="KEGG" id="vfm:VFMJ11_0926"/>
<dbReference type="HOGENOM" id="CLU_057698_1_0_6"/>
<dbReference type="UniPathway" id="UPA00094"/>
<dbReference type="Proteomes" id="UP000001857">
    <property type="component" value="Chromosome I"/>
</dbReference>
<dbReference type="GO" id="GO:0004318">
    <property type="term" value="F:enoyl-[acyl-carrier-protein] reductase (NADH) activity"/>
    <property type="evidence" value="ECO:0007669"/>
    <property type="project" value="UniProtKB-UniRule"/>
</dbReference>
<dbReference type="GO" id="GO:0051287">
    <property type="term" value="F:NAD binding"/>
    <property type="evidence" value="ECO:0007669"/>
    <property type="project" value="UniProtKB-UniRule"/>
</dbReference>
<dbReference type="GO" id="GO:0050343">
    <property type="term" value="F:trans-2-enoyl-CoA reductase (NADH) activity"/>
    <property type="evidence" value="ECO:0007669"/>
    <property type="project" value="TreeGrafter"/>
</dbReference>
<dbReference type="GO" id="GO:0006633">
    <property type="term" value="P:fatty acid biosynthetic process"/>
    <property type="evidence" value="ECO:0007669"/>
    <property type="project" value="UniProtKB-UniRule"/>
</dbReference>
<dbReference type="FunFam" id="3.40.50.720:FF:000221">
    <property type="entry name" value="Enoyl-[acyl-carrier-protein] reductase [NADH]"/>
    <property type="match status" value="1"/>
</dbReference>
<dbReference type="Gene3D" id="3.40.50.720">
    <property type="entry name" value="NAD(P)-binding Rossmann-like Domain"/>
    <property type="match status" value="1"/>
</dbReference>
<dbReference type="HAMAP" id="MF_01838">
    <property type="entry name" value="FabV_reductase"/>
    <property type="match status" value="1"/>
</dbReference>
<dbReference type="InterPro" id="IPR024906">
    <property type="entry name" value="Eno_Rdtase_FAD-bd_dom"/>
</dbReference>
<dbReference type="InterPro" id="IPR024910">
    <property type="entry name" value="Enoyl-CoA_Rdtase_cat_dom"/>
</dbReference>
<dbReference type="InterPro" id="IPR050048">
    <property type="entry name" value="FabV-like_NADH_b"/>
</dbReference>
<dbReference type="InterPro" id="IPR010758">
    <property type="entry name" value="Trans-2-enoyl-CoA_reductase"/>
</dbReference>
<dbReference type="NCBIfam" id="NF043048">
    <property type="entry name" value="EnoyACPredFabV"/>
    <property type="match status" value="1"/>
</dbReference>
<dbReference type="NCBIfam" id="NF010177">
    <property type="entry name" value="PRK13656.1"/>
    <property type="match status" value="1"/>
</dbReference>
<dbReference type="PANTHER" id="PTHR37480">
    <property type="entry name" value="ENOYL-[ACYL-CARRIER-PROTEIN] REDUCTASE [NADH]"/>
    <property type="match status" value="1"/>
</dbReference>
<dbReference type="PANTHER" id="PTHR37480:SF1">
    <property type="entry name" value="ENOYL-[ACYL-CARRIER-PROTEIN] REDUCTASE [NADH]"/>
    <property type="match status" value="1"/>
</dbReference>
<dbReference type="Pfam" id="PF07055">
    <property type="entry name" value="Eno-Rase_FAD_bd"/>
    <property type="match status" value="1"/>
</dbReference>
<dbReference type="Pfam" id="PF12242">
    <property type="entry name" value="Eno-Rase_NADH_b"/>
    <property type="match status" value="1"/>
</dbReference>
<dbReference type="Pfam" id="PF12241">
    <property type="entry name" value="Enoyl_reductase"/>
    <property type="match status" value="1"/>
</dbReference>
<feature type="chain" id="PRO_1000188371" description="Enoyl-[acyl-carrier-protein] reductase [NADH]">
    <location>
        <begin position="1"/>
        <end position="400"/>
    </location>
</feature>
<feature type="active site" description="Proton donor" evidence="1">
    <location>
        <position position="235"/>
    </location>
</feature>
<feature type="binding site" evidence="1">
    <location>
        <begin position="48"/>
        <end position="53"/>
    </location>
    <ligand>
        <name>NAD(+)</name>
        <dbReference type="ChEBI" id="CHEBI:57540"/>
    </ligand>
</feature>
<feature type="binding site" evidence="1">
    <location>
        <begin position="74"/>
        <end position="75"/>
    </location>
    <ligand>
        <name>NAD(+)</name>
        <dbReference type="ChEBI" id="CHEBI:57540"/>
    </ligand>
</feature>
<feature type="binding site" evidence="1">
    <location>
        <begin position="111"/>
        <end position="112"/>
    </location>
    <ligand>
        <name>NAD(+)</name>
        <dbReference type="ChEBI" id="CHEBI:57540"/>
    </ligand>
</feature>
<feature type="binding site" evidence="1">
    <location>
        <begin position="139"/>
        <end position="140"/>
    </location>
    <ligand>
        <name>NAD(+)</name>
        <dbReference type="ChEBI" id="CHEBI:57540"/>
    </ligand>
</feature>
<feature type="binding site" evidence="1">
    <location>
        <position position="225"/>
    </location>
    <ligand>
        <name>substrate</name>
    </ligand>
</feature>
<feature type="binding site" evidence="1">
    <location>
        <position position="244"/>
    </location>
    <ligand>
        <name>NAD(+)</name>
        <dbReference type="ChEBI" id="CHEBI:57540"/>
    </ligand>
</feature>
<feature type="binding site" evidence="1">
    <location>
        <begin position="273"/>
        <end position="275"/>
    </location>
    <ligand>
        <name>NAD(+)</name>
        <dbReference type="ChEBI" id="CHEBI:57540"/>
    </ligand>
</feature>
<feature type="site" description="Plays an important role in discriminating NADH against NADPH" evidence="1">
    <location>
        <position position="75"/>
    </location>
</feature>
<keyword id="KW-0275">Fatty acid biosynthesis</keyword>
<keyword id="KW-0276">Fatty acid metabolism</keyword>
<keyword id="KW-0444">Lipid biosynthesis</keyword>
<keyword id="KW-0443">Lipid metabolism</keyword>
<keyword id="KW-0520">NAD</keyword>
<keyword id="KW-0560">Oxidoreductase</keyword>
<evidence type="ECO:0000255" key="1">
    <source>
        <dbReference type="HAMAP-Rule" id="MF_01838"/>
    </source>
</evidence>
<protein>
    <recommendedName>
        <fullName evidence="1">Enoyl-[acyl-carrier-protein] reductase [NADH]</fullName>
        <shortName evidence="1">ENR</shortName>
        <ecNumber evidence="1">1.3.1.9</ecNumber>
    </recommendedName>
</protein>
<sequence length="400" mass="43804">MIIKPRIRGFICTTTHPVGCEQNVKEQIALTKAQGPIANAPKRVLVVGSSSGYGLSSRITAAFGGGASTIGVFFEKAGTEKKPGTAGWYNSAAFDKFAKEEGLYSKSLNGDAFSNEAKQKTIDLIKEDLGQIDMVVYSLASPVRKMPETGEVIRSSLKPIGETYTATAVDTNKDAIIEASVEPATEQEIKDTVTVMGGEDWELWINALSEAGVLADGCKTVAYSYIGTELTWPIYWDGALGQAKMDLDRAATALNEKLSTTGGTANVAVLKSVVTQASSAIPVMPLYIAMVFKKMREEGVHEGCQEQILRMFSQRLYKADGSAAEVDEKNRLRLDDWELREDIQQHCRDLWPQVTTENLKDLTDYVEYKEEFLKLFGFGVDGVDYDADVNPEVNFDVADI</sequence>
<reference key="1">
    <citation type="submission" date="2008-08" db="EMBL/GenBank/DDBJ databases">
        <title>Complete sequence of Vibrio fischeri strain MJ11.</title>
        <authorList>
            <person name="Mandel M.J."/>
            <person name="Stabb E.V."/>
            <person name="Ruby E.G."/>
            <person name="Ferriera S."/>
            <person name="Johnson J."/>
            <person name="Kravitz S."/>
            <person name="Beeson K."/>
            <person name="Sutton G."/>
            <person name="Rogers Y.-H."/>
            <person name="Friedman R."/>
            <person name="Frazier M."/>
            <person name="Venter J.C."/>
        </authorList>
    </citation>
    <scope>NUCLEOTIDE SEQUENCE [LARGE SCALE GENOMIC DNA]</scope>
    <source>
        <strain>MJ11</strain>
    </source>
</reference>
<comment type="function">
    <text evidence="1">Involved in the final reduction of the elongation cycle of fatty acid synthesis (FAS II). Catalyzes the reduction of a carbon-carbon double bond in an enoyl moiety that is covalently linked to an acyl carrier protein (ACP).</text>
</comment>
<comment type="catalytic activity">
    <reaction evidence="1">
        <text>a 2,3-saturated acyl-[ACP] + NAD(+) = a (2E)-enoyl-[ACP] + NADH + H(+)</text>
        <dbReference type="Rhea" id="RHEA:10240"/>
        <dbReference type="Rhea" id="RHEA-COMP:9925"/>
        <dbReference type="Rhea" id="RHEA-COMP:9926"/>
        <dbReference type="ChEBI" id="CHEBI:15378"/>
        <dbReference type="ChEBI" id="CHEBI:57540"/>
        <dbReference type="ChEBI" id="CHEBI:57945"/>
        <dbReference type="ChEBI" id="CHEBI:78784"/>
        <dbReference type="ChEBI" id="CHEBI:78785"/>
        <dbReference type="EC" id="1.3.1.9"/>
    </reaction>
</comment>
<comment type="pathway">
    <text evidence="1">Lipid metabolism; fatty acid biosynthesis.</text>
</comment>
<comment type="subunit">
    <text evidence="1">Monomer.</text>
</comment>
<comment type="similarity">
    <text evidence="1">Belongs to the TER reductase family.</text>
</comment>
<proteinExistence type="inferred from homology"/>
<organism>
    <name type="scientific">Aliivibrio fischeri (strain MJ11)</name>
    <name type="common">Vibrio fischeri</name>
    <dbReference type="NCBI Taxonomy" id="388396"/>
    <lineage>
        <taxon>Bacteria</taxon>
        <taxon>Pseudomonadati</taxon>
        <taxon>Pseudomonadota</taxon>
        <taxon>Gammaproteobacteria</taxon>
        <taxon>Vibrionales</taxon>
        <taxon>Vibrionaceae</taxon>
        <taxon>Aliivibrio</taxon>
    </lineage>
</organism>